<sequence>MAAKIRRDDEVIVLTGKDKGKRGKVKNVLSSGKVIVEGINLVKKHQKPVPALNQPGGIVEKEAAIQVSNVAIFNTATGKADRVGFRFEDGKKVRFFKSNSETIK</sequence>
<gene>
    <name evidence="2" type="primary">rplX</name>
    <name type="ordered locus">STY4369</name>
    <name type="ordered locus">t4076</name>
</gene>
<proteinExistence type="inferred from homology"/>
<accession>Q8Z1X8</accession>
<name>RL24_SALTI</name>
<reference key="1">
    <citation type="journal article" date="2001" name="Nature">
        <title>Complete genome sequence of a multiple drug resistant Salmonella enterica serovar Typhi CT18.</title>
        <authorList>
            <person name="Parkhill J."/>
            <person name="Dougan G."/>
            <person name="James K.D."/>
            <person name="Thomson N.R."/>
            <person name="Pickard D."/>
            <person name="Wain J."/>
            <person name="Churcher C.M."/>
            <person name="Mungall K.L."/>
            <person name="Bentley S.D."/>
            <person name="Holden M.T.G."/>
            <person name="Sebaihia M."/>
            <person name="Baker S."/>
            <person name="Basham D."/>
            <person name="Brooks K."/>
            <person name="Chillingworth T."/>
            <person name="Connerton P."/>
            <person name="Cronin A."/>
            <person name="Davis P."/>
            <person name="Davies R.M."/>
            <person name="Dowd L."/>
            <person name="White N."/>
            <person name="Farrar J."/>
            <person name="Feltwell T."/>
            <person name="Hamlin N."/>
            <person name="Haque A."/>
            <person name="Hien T.T."/>
            <person name="Holroyd S."/>
            <person name="Jagels K."/>
            <person name="Krogh A."/>
            <person name="Larsen T.S."/>
            <person name="Leather S."/>
            <person name="Moule S."/>
            <person name="O'Gaora P."/>
            <person name="Parry C."/>
            <person name="Quail M.A."/>
            <person name="Rutherford K.M."/>
            <person name="Simmonds M."/>
            <person name="Skelton J."/>
            <person name="Stevens K."/>
            <person name="Whitehead S."/>
            <person name="Barrell B.G."/>
        </authorList>
    </citation>
    <scope>NUCLEOTIDE SEQUENCE [LARGE SCALE GENOMIC DNA]</scope>
    <source>
        <strain>CT18</strain>
    </source>
</reference>
<reference key="2">
    <citation type="journal article" date="2003" name="J. Bacteriol.">
        <title>Comparative genomics of Salmonella enterica serovar Typhi strains Ty2 and CT18.</title>
        <authorList>
            <person name="Deng W."/>
            <person name="Liou S.-R."/>
            <person name="Plunkett G. III"/>
            <person name="Mayhew G.F."/>
            <person name="Rose D.J."/>
            <person name="Burland V."/>
            <person name="Kodoyianni V."/>
            <person name="Schwartz D.C."/>
            <person name="Blattner F.R."/>
        </authorList>
    </citation>
    <scope>NUCLEOTIDE SEQUENCE [LARGE SCALE GENOMIC DNA]</scope>
    <source>
        <strain>ATCC 700931 / Ty2</strain>
    </source>
</reference>
<comment type="function">
    <text evidence="2">One of two assembly initiator proteins, it binds directly to the 5'-end of the 23S rRNA, where it nucleates assembly of the 50S subunit.</text>
</comment>
<comment type="function">
    <text evidence="2">One of the proteins that surrounds the polypeptide exit tunnel on the outside of the subunit.</text>
</comment>
<comment type="subunit">
    <text evidence="2">Part of the 50S ribosomal subunit.</text>
</comment>
<comment type="similarity">
    <text evidence="2">Belongs to the universal ribosomal protein uL24 family.</text>
</comment>
<organism>
    <name type="scientific">Salmonella typhi</name>
    <dbReference type="NCBI Taxonomy" id="90370"/>
    <lineage>
        <taxon>Bacteria</taxon>
        <taxon>Pseudomonadati</taxon>
        <taxon>Pseudomonadota</taxon>
        <taxon>Gammaproteobacteria</taxon>
        <taxon>Enterobacterales</taxon>
        <taxon>Enterobacteriaceae</taxon>
        <taxon>Salmonella</taxon>
    </lineage>
</organism>
<evidence type="ECO:0000250" key="1"/>
<evidence type="ECO:0000255" key="2">
    <source>
        <dbReference type="HAMAP-Rule" id="MF_01326"/>
    </source>
</evidence>
<evidence type="ECO:0000305" key="3"/>
<keyword id="KW-0687">Ribonucleoprotein</keyword>
<keyword id="KW-0689">Ribosomal protein</keyword>
<keyword id="KW-0694">RNA-binding</keyword>
<keyword id="KW-0699">rRNA-binding</keyword>
<feature type="initiator methionine" description="Removed" evidence="1">
    <location>
        <position position="1"/>
    </location>
</feature>
<feature type="chain" id="PRO_0000130707" description="Large ribosomal subunit protein uL24">
    <location>
        <begin position="2"/>
        <end position="104"/>
    </location>
</feature>
<protein>
    <recommendedName>
        <fullName evidence="2">Large ribosomal subunit protein uL24</fullName>
    </recommendedName>
    <alternativeName>
        <fullName evidence="3">50S ribosomal protein L24</fullName>
    </alternativeName>
</protein>
<dbReference type="EMBL" id="AL513382">
    <property type="protein sequence ID" value="CAD09157.1"/>
    <property type="molecule type" value="Genomic_DNA"/>
</dbReference>
<dbReference type="EMBL" id="AE014613">
    <property type="protein sequence ID" value="AAO71543.1"/>
    <property type="molecule type" value="Genomic_DNA"/>
</dbReference>
<dbReference type="RefSeq" id="NP_458471.1">
    <property type="nucleotide sequence ID" value="NC_003198.1"/>
</dbReference>
<dbReference type="RefSeq" id="WP_000729187.1">
    <property type="nucleotide sequence ID" value="NZ_WSUR01000046.1"/>
</dbReference>
<dbReference type="SMR" id="Q8Z1X8"/>
<dbReference type="STRING" id="220341.gene:17588197"/>
<dbReference type="KEGG" id="stt:t4076"/>
<dbReference type="KEGG" id="sty:STY4369"/>
<dbReference type="PATRIC" id="fig|220341.7.peg.4465"/>
<dbReference type="eggNOG" id="COG0198">
    <property type="taxonomic scope" value="Bacteria"/>
</dbReference>
<dbReference type="HOGENOM" id="CLU_093315_2_2_6"/>
<dbReference type="OMA" id="HISNLML"/>
<dbReference type="OrthoDB" id="9807419at2"/>
<dbReference type="Proteomes" id="UP000000541">
    <property type="component" value="Chromosome"/>
</dbReference>
<dbReference type="Proteomes" id="UP000002670">
    <property type="component" value="Chromosome"/>
</dbReference>
<dbReference type="GO" id="GO:0005829">
    <property type="term" value="C:cytosol"/>
    <property type="evidence" value="ECO:0007669"/>
    <property type="project" value="UniProtKB-ARBA"/>
</dbReference>
<dbReference type="GO" id="GO:1990904">
    <property type="term" value="C:ribonucleoprotein complex"/>
    <property type="evidence" value="ECO:0007669"/>
    <property type="project" value="UniProtKB-KW"/>
</dbReference>
<dbReference type="GO" id="GO:0005840">
    <property type="term" value="C:ribosome"/>
    <property type="evidence" value="ECO:0007669"/>
    <property type="project" value="UniProtKB-KW"/>
</dbReference>
<dbReference type="GO" id="GO:0019843">
    <property type="term" value="F:rRNA binding"/>
    <property type="evidence" value="ECO:0007669"/>
    <property type="project" value="UniProtKB-UniRule"/>
</dbReference>
<dbReference type="GO" id="GO:0003735">
    <property type="term" value="F:structural constituent of ribosome"/>
    <property type="evidence" value="ECO:0007669"/>
    <property type="project" value="InterPro"/>
</dbReference>
<dbReference type="GO" id="GO:0006412">
    <property type="term" value="P:translation"/>
    <property type="evidence" value="ECO:0007669"/>
    <property type="project" value="UniProtKB-UniRule"/>
</dbReference>
<dbReference type="CDD" id="cd06089">
    <property type="entry name" value="KOW_RPL26"/>
    <property type="match status" value="1"/>
</dbReference>
<dbReference type="FunFam" id="2.30.30.30:FF:000004">
    <property type="entry name" value="50S ribosomal protein L24"/>
    <property type="match status" value="1"/>
</dbReference>
<dbReference type="Gene3D" id="2.30.30.30">
    <property type="match status" value="1"/>
</dbReference>
<dbReference type="HAMAP" id="MF_01326_B">
    <property type="entry name" value="Ribosomal_uL24_B"/>
    <property type="match status" value="1"/>
</dbReference>
<dbReference type="InterPro" id="IPR005824">
    <property type="entry name" value="KOW"/>
</dbReference>
<dbReference type="InterPro" id="IPR014722">
    <property type="entry name" value="Rib_uL2_dom2"/>
</dbReference>
<dbReference type="InterPro" id="IPR003256">
    <property type="entry name" value="Ribosomal_uL24"/>
</dbReference>
<dbReference type="InterPro" id="IPR005825">
    <property type="entry name" value="Ribosomal_uL24_CS"/>
</dbReference>
<dbReference type="InterPro" id="IPR041988">
    <property type="entry name" value="Ribosomal_uL24_KOW"/>
</dbReference>
<dbReference type="InterPro" id="IPR008991">
    <property type="entry name" value="Translation_prot_SH3-like_sf"/>
</dbReference>
<dbReference type="NCBIfam" id="TIGR01079">
    <property type="entry name" value="rplX_bact"/>
    <property type="match status" value="1"/>
</dbReference>
<dbReference type="PANTHER" id="PTHR12903">
    <property type="entry name" value="MITOCHONDRIAL RIBOSOMAL PROTEIN L24"/>
    <property type="match status" value="1"/>
</dbReference>
<dbReference type="Pfam" id="PF00467">
    <property type="entry name" value="KOW"/>
    <property type="match status" value="1"/>
</dbReference>
<dbReference type="Pfam" id="PF17136">
    <property type="entry name" value="ribosomal_L24"/>
    <property type="match status" value="1"/>
</dbReference>
<dbReference type="SMART" id="SM00739">
    <property type="entry name" value="KOW"/>
    <property type="match status" value="1"/>
</dbReference>
<dbReference type="SUPFAM" id="SSF50104">
    <property type="entry name" value="Translation proteins SH3-like domain"/>
    <property type="match status" value="1"/>
</dbReference>
<dbReference type="PROSITE" id="PS01108">
    <property type="entry name" value="RIBOSOMAL_L24"/>
    <property type="match status" value="1"/>
</dbReference>